<comment type="function">
    <text>Kills Lactococci.</text>
</comment>
<comment type="subcellular location">
    <subcellularLocation>
        <location>Secreted</location>
    </subcellularLocation>
    <subcellularLocation>
        <location evidence="3">Host cell membrane</location>
        <topology evidence="3">Single-pass membrane protein</topology>
    </subcellularLocation>
</comment>
<protein>
    <recommendedName>
        <fullName>Bacteriocin lactococcin-A</fullName>
        <shortName>LCN-A</shortName>
    </recommendedName>
</protein>
<name>LCNA_LACLC</name>
<keyword id="KW-0044">Antibiotic</keyword>
<keyword id="KW-0929">Antimicrobial</keyword>
<keyword id="KW-0078">Bacteriocin</keyword>
<keyword id="KW-0903">Direct protein sequencing</keyword>
<keyword id="KW-1032">Host cell membrane</keyword>
<keyword id="KW-1043">Host membrane</keyword>
<keyword id="KW-0472">Membrane</keyword>
<keyword id="KW-0614">Plasmid</keyword>
<keyword id="KW-0964">Secreted</keyword>
<keyword id="KW-0812">Transmembrane</keyword>
<keyword id="KW-1133">Transmembrane helix</keyword>
<reference key="1">
    <citation type="journal article" date="1991" name="Appl. Environ. Microbiol.">
        <title>Organization and nucleotide sequences of two lactococcal bacteriocin operons.</title>
        <authorList>
            <person name="van Belkum M.J."/>
            <person name="Hayema B.J."/>
            <person name="Jeeninga R.E."/>
            <person name="Kok J."/>
            <person name="Venema G."/>
        </authorList>
    </citation>
    <scope>NUCLEOTIDE SEQUENCE [GENOMIC DNA]</scope>
    <source>
        <strain>9B4</strain>
        <plasmid>p9B4-6</plasmid>
    </source>
</reference>
<reference key="2">
    <citation type="journal article" date="1991" name="J. Bacteriol.">
        <title>Lactococcin A, a new bacteriocin from Lactococcus lactis subsp. cremoris: isolation and characterization of the protein and its gene.</title>
        <authorList>
            <person name="Holo H."/>
            <person name="Nilssen O."/>
            <person name="Nes I.F."/>
        </authorList>
    </citation>
    <scope>NUCLEOTIDE SEQUENCE [GENOMIC DNA]</scope>
    <scope>PROTEIN SEQUENCE OF 22-75</scope>
    <source>
        <strain>LMG 2130</strain>
    </source>
</reference>
<dbReference type="EMBL" id="M63675">
    <property type="protein sequence ID" value="AAA25163.1"/>
    <property type="molecule type" value="Genomic_DNA"/>
</dbReference>
<dbReference type="PIR" id="A39443">
    <property type="entry name" value="A39443"/>
</dbReference>
<dbReference type="RefSeq" id="WP_015081786.1">
    <property type="nucleotide sequence ID" value="NZ_WJUW01000098.1"/>
</dbReference>
<dbReference type="SMR" id="P0A313"/>
<dbReference type="GO" id="GO:0005576">
    <property type="term" value="C:extracellular region"/>
    <property type="evidence" value="ECO:0007669"/>
    <property type="project" value="UniProtKB-SubCell"/>
</dbReference>
<dbReference type="GO" id="GO:0020002">
    <property type="term" value="C:host cell plasma membrane"/>
    <property type="evidence" value="ECO:0007669"/>
    <property type="project" value="UniProtKB-SubCell"/>
</dbReference>
<dbReference type="GO" id="GO:0016020">
    <property type="term" value="C:membrane"/>
    <property type="evidence" value="ECO:0007669"/>
    <property type="project" value="UniProtKB-KW"/>
</dbReference>
<dbReference type="GO" id="GO:0042742">
    <property type="term" value="P:defense response to bacterium"/>
    <property type="evidence" value="ECO:0007669"/>
    <property type="project" value="UniProtKB-KW"/>
</dbReference>
<dbReference type="GO" id="GO:0031640">
    <property type="term" value="P:killing of cells of another organism"/>
    <property type="evidence" value="ECO:0007669"/>
    <property type="project" value="UniProtKB-KW"/>
</dbReference>
<dbReference type="InterPro" id="IPR007464">
    <property type="entry name" value="Bacteriocin_IId"/>
</dbReference>
<dbReference type="Pfam" id="PF04369">
    <property type="entry name" value="Lactococcin"/>
    <property type="match status" value="1"/>
</dbReference>
<feature type="propeptide" id="PRO_0000002768" evidence="2">
    <location>
        <begin position="1"/>
        <end position="21"/>
    </location>
</feature>
<feature type="chain" id="PRO_0000002769" description="Bacteriocin lactococcin-A">
    <location>
        <begin position="22"/>
        <end position="75"/>
    </location>
</feature>
<feature type="transmembrane region" description="Helical" evidence="1">
    <location>
        <begin position="30"/>
        <end position="52"/>
    </location>
</feature>
<proteinExistence type="evidence at protein level"/>
<evidence type="ECO:0000255" key="1"/>
<evidence type="ECO:0000269" key="2">
    <source>
    </source>
</evidence>
<evidence type="ECO:0000305" key="3"/>
<gene>
    <name type="primary">lcnA</name>
</gene>
<accession>P0A313</accession>
<accession>Q00563</accession>
<organism>
    <name type="scientific">Lactococcus lactis subsp. cremoris</name>
    <name type="common">Streptococcus cremoris</name>
    <dbReference type="NCBI Taxonomy" id="1359"/>
    <lineage>
        <taxon>Bacteria</taxon>
        <taxon>Bacillati</taxon>
        <taxon>Bacillota</taxon>
        <taxon>Bacilli</taxon>
        <taxon>Lactobacillales</taxon>
        <taxon>Streptococcaceae</taxon>
        <taxon>Lactococcus</taxon>
    </lineage>
</organism>
<sequence>MKNQLNFNIVSDEELSEANGGKLTFIQSTAAGDLYYNTNTHKYVYQQTQNAFGAAANTIVNGWMGGAAGGFGLHH</sequence>
<geneLocation type="plasmid">
    <name>p9B4-6</name>
</geneLocation>